<evidence type="ECO:0000250" key="1"/>
<evidence type="ECO:0000255" key="2"/>
<evidence type="ECO:0000305" key="3"/>
<sequence>MAMTQVFVIFILLATSLCNSNALPSSVINGFGYDYCIVECSITFLDDACKPLCIDRGYSDGGCIGLSPHFKCCCKK</sequence>
<keyword id="KW-0929">Antimicrobial</keyword>
<keyword id="KW-1015">Disulfide bond</keyword>
<keyword id="KW-0295">Fungicide</keyword>
<keyword id="KW-0611">Plant defense</keyword>
<keyword id="KW-1185">Reference proteome</keyword>
<keyword id="KW-0964">Secreted</keyword>
<keyword id="KW-0732">Signal</keyword>
<organism evidence="3">
    <name type="scientific">Arabidopsis thaliana</name>
    <name type="common">Mouse-ear cress</name>
    <dbReference type="NCBI Taxonomy" id="3702"/>
    <lineage>
        <taxon>Eukaryota</taxon>
        <taxon>Viridiplantae</taxon>
        <taxon>Streptophyta</taxon>
        <taxon>Embryophyta</taxon>
        <taxon>Tracheophyta</taxon>
        <taxon>Spermatophyta</taxon>
        <taxon>Magnoliopsida</taxon>
        <taxon>eudicotyledons</taxon>
        <taxon>Gunneridae</taxon>
        <taxon>Pentapetalae</taxon>
        <taxon>rosids</taxon>
        <taxon>malvids</taxon>
        <taxon>Brassicales</taxon>
        <taxon>Brassicaceae</taxon>
        <taxon>Camelineae</taxon>
        <taxon>Arabidopsis</taxon>
    </lineage>
</organism>
<gene>
    <name type="primary">LCR84</name>
    <name type="ordered locus">At2g14365</name>
    <name type="ORF">T1O16</name>
</gene>
<reference evidence="3" key="1">
    <citation type="journal article" date="1999" name="Nature">
        <title>Sequence and analysis of chromosome 2 of the plant Arabidopsis thaliana.</title>
        <authorList>
            <person name="Lin X."/>
            <person name="Kaul S."/>
            <person name="Rounsley S.D."/>
            <person name="Shea T.P."/>
            <person name="Benito M.-I."/>
            <person name="Town C.D."/>
            <person name="Fujii C.Y."/>
            <person name="Mason T.M."/>
            <person name="Bowman C.L."/>
            <person name="Barnstead M.E."/>
            <person name="Feldblyum T.V."/>
            <person name="Buell C.R."/>
            <person name="Ketchum K.A."/>
            <person name="Lee J.J."/>
            <person name="Ronning C.M."/>
            <person name="Koo H.L."/>
            <person name="Moffat K.S."/>
            <person name="Cronin L.A."/>
            <person name="Shen M."/>
            <person name="Pai G."/>
            <person name="Van Aken S."/>
            <person name="Umayam L."/>
            <person name="Tallon L.J."/>
            <person name="Gill J.E."/>
            <person name="Adams M.D."/>
            <person name="Carrera A.J."/>
            <person name="Creasy T.H."/>
            <person name="Goodman H.M."/>
            <person name="Somerville C.R."/>
            <person name="Copenhaver G.P."/>
            <person name="Preuss D."/>
            <person name="Nierman W.C."/>
            <person name="White O."/>
            <person name="Eisen J.A."/>
            <person name="Salzberg S.L."/>
            <person name="Fraser C.M."/>
            <person name="Venter J.C."/>
        </authorList>
    </citation>
    <scope>NUCLEOTIDE SEQUENCE [LARGE SCALE GENOMIC DNA]</scope>
    <source>
        <strain>cv. Columbia</strain>
    </source>
</reference>
<reference key="2">
    <citation type="journal article" date="2017" name="Plant J.">
        <title>Araport11: a complete reannotation of the Arabidopsis thaliana reference genome.</title>
        <authorList>
            <person name="Cheng C.Y."/>
            <person name="Krishnakumar V."/>
            <person name="Chan A.P."/>
            <person name="Thibaud-Nissen F."/>
            <person name="Schobel S."/>
            <person name="Town C.D."/>
        </authorList>
    </citation>
    <scope>GENOME REANNOTATION</scope>
    <source>
        <strain>cv. Columbia</strain>
    </source>
</reference>
<reference key="3">
    <citation type="submission" date="2005-06" db="EMBL/GenBank/DDBJ databases">
        <title>Full-length cDNA from Arabidopsis thaliana.</title>
        <authorList>
            <person name="Alexandrov N.N."/>
            <person name="Brover V.V."/>
            <person name="Troukhan M.E."/>
            <person name="Lu Y.-P."/>
            <person name="Flavell R.B."/>
            <person name="Feldmann K.A."/>
        </authorList>
    </citation>
    <scope>NUCLEOTIDE SEQUENCE [LARGE SCALE MRNA]</scope>
</reference>
<reference evidence="3" key="4">
    <citation type="journal article" date="2001" name="Plant Mol. Biol.">
        <title>Two large Arabidopsis thaliana gene families are homologous to the Brassica gene superfamily that encodes pollen coat proteins and the male component of the self-incompatibility response.</title>
        <authorList>
            <person name="Vanoosthuyse V."/>
            <person name="Miege C."/>
            <person name="Dumas C."/>
            <person name="Cock J.M."/>
        </authorList>
    </citation>
    <scope>IDENTIFICATION</scope>
</reference>
<reference key="5">
    <citation type="journal article" date="2005" name="Plant Physiol.">
        <title>Genome organization of more than 300 defensin-like genes in Arabidopsis.</title>
        <authorList>
            <person name="Silverstein K.A.T."/>
            <person name="Graham M.A."/>
            <person name="Paape T.D."/>
            <person name="VandenBosch K.A."/>
        </authorList>
    </citation>
    <scope>GENE FAMILY</scope>
</reference>
<accession>P82793</accession>
<dbReference type="EMBL" id="AC006304">
    <property type="status" value="NOT_ANNOTATED_CDS"/>
    <property type="molecule type" value="Genomic_DNA"/>
</dbReference>
<dbReference type="EMBL" id="CP002685">
    <property type="protein sequence ID" value="AEC06301.1"/>
    <property type="molecule type" value="Genomic_DNA"/>
</dbReference>
<dbReference type="EMBL" id="DQ108693">
    <property type="status" value="NOT_ANNOTATED_CDS"/>
    <property type="molecule type" value="mRNA"/>
</dbReference>
<dbReference type="RefSeq" id="NP_001031355.1">
    <property type="nucleotide sequence ID" value="NM_001036278.3"/>
</dbReference>
<dbReference type="SMR" id="P82793"/>
<dbReference type="STRING" id="3702.P82793"/>
<dbReference type="PaxDb" id="3702-AT2G14365.1"/>
<dbReference type="EnsemblPlants" id="AT2G14365.1">
    <property type="protein sequence ID" value="AT2G14365.1"/>
    <property type="gene ID" value="AT2G14365"/>
</dbReference>
<dbReference type="GeneID" id="3768590"/>
<dbReference type="Gramene" id="AT2G14365.1">
    <property type="protein sequence ID" value="AT2G14365.1"/>
    <property type="gene ID" value="AT2G14365"/>
</dbReference>
<dbReference type="KEGG" id="ath:AT2G14365"/>
<dbReference type="Araport" id="AT2G14365"/>
<dbReference type="TAIR" id="AT2G14365">
    <property type="gene designation" value="LCR84"/>
</dbReference>
<dbReference type="HOGENOM" id="CLU_165205_1_0_1"/>
<dbReference type="InParanoid" id="P82793"/>
<dbReference type="OrthoDB" id="10439017at2759"/>
<dbReference type="PhylomeDB" id="P82793"/>
<dbReference type="PRO" id="PR:P82793"/>
<dbReference type="Proteomes" id="UP000006548">
    <property type="component" value="Chromosome 2"/>
</dbReference>
<dbReference type="ExpressionAtlas" id="P82793">
    <property type="expression patterns" value="baseline and differential"/>
</dbReference>
<dbReference type="GO" id="GO:0005576">
    <property type="term" value="C:extracellular region"/>
    <property type="evidence" value="ECO:0007669"/>
    <property type="project" value="UniProtKB-SubCell"/>
</dbReference>
<dbReference type="GO" id="GO:0050832">
    <property type="term" value="P:defense response to fungus"/>
    <property type="evidence" value="ECO:0007669"/>
    <property type="project" value="UniProtKB-KW"/>
</dbReference>
<dbReference type="GO" id="GO:0031640">
    <property type="term" value="P:killing of cells of another organism"/>
    <property type="evidence" value="ECO:0007669"/>
    <property type="project" value="UniProtKB-KW"/>
</dbReference>
<dbReference type="InterPro" id="IPR056373">
    <property type="entry name" value="Defensin-like_dom"/>
</dbReference>
<dbReference type="Pfam" id="PF24552">
    <property type="entry name" value="Defensin"/>
    <property type="match status" value="1"/>
</dbReference>
<comment type="subcellular location">
    <subcellularLocation>
        <location evidence="1">Secreted</location>
    </subcellularLocation>
</comment>
<comment type="similarity">
    <text evidence="3">Belongs to the DEFL family.</text>
</comment>
<protein>
    <recommendedName>
        <fullName>Defensin-like protein 71</fullName>
    </recommendedName>
    <alternativeName>
        <fullName>Low-molecular-weight cysteine-rich protein 84</fullName>
        <shortName>Protein LCR84</shortName>
    </alternativeName>
</protein>
<feature type="signal peptide" evidence="2">
    <location>
        <begin position="1"/>
        <end position="22"/>
    </location>
</feature>
<feature type="chain" id="PRO_0000017308" description="Defensin-like protein 71">
    <location>
        <begin position="23"/>
        <end position="76"/>
    </location>
</feature>
<feature type="disulfide bond" evidence="1">
    <location>
        <begin position="36"/>
        <end position="74"/>
    </location>
</feature>
<feature type="disulfide bond" evidence="1">
    <location>
        <begin position="40"/>
        <end position="63"/>
    </location>
</feature>
<feature type="disulfide bond" evidence="1">
    <location>
        <begin position="49"/>
        <end position="72"/>
    </location>
</feature>
<feature type="disulfide bond" evidence="1">
    <location>
        <begin position="53"/>
        <end position="73"/>
    </location>
</feature>
<proteinExistence type="inferred from homology"/>
<name>DEF71_ARATH</name>